<keyword id="KW-0175">Coiled coil</keyword>
<keyword id="KW-0539">Nucleus</keyword>
<keyword id="KW-1185">Reference proteome</keyword>
<keyword id="KW-0804">Transcription</keyword>
<keyword id="KW-0805">Transcription regulation</keyword>
<name>MD22A_ARATH</name>
<accession>Q9SA42</accession>
<accession>Q8LEQ1</accession>
<comment type="function">
    <text>Component of the Mediator complex, a coactivator involved in the regulated transcription of nearly all RNA polymerase II-dependent genes. Mediator functions as a bridge to convey information from gene-specific regulatory proteins to the basal RNA polymerase II transcription machinery. The Mediator complex, having a compact conformation in its free form, is recruited to promoters by direct interactions with regulatory proteins and serves for the assembly of a functional preinitiation complex with RNA polymerase II and the general transcription factors.</text>
</comment>
<comment type="subunit">
    <text evidence="2">Component of the Mediator complex.</text>
</comment>
<comment type="subcellular location">
    <subcellularLocation>
        <location evidence="3">Nucleus</location>
    </subcellularLocation>
</comment>
<comment type="similarity">
    <text evidence="3">Belongs to the Mediator complex subunit 22 family.</text>
</comment>
<dbReference type="EMBL" id="AC006341">
    <property type="protein sequence ID" value="AAD34695.1"/>
    <property type="molecule type" value="Genomic_DNA"/>
</dbReference>
<dbReference type="EMBL" id="CP002684">
    <property type="protein sequence ID" value="AEE29450.1"/>
    <property type="molecule type" value="Genomic_DNA"/>
</dbReference>
<dbReference type="EMBL" id="AK117750">
    <property type="protein sequence ID" value="BAC42398.1"/>
    <property type="molecule type" value="mRNA"/>
</dbReference>
<dbReference type="EMBL" id="BT003677">
    <property type="protein sequence ID" value="AAO39905.1"/>
    <property type="molecule type" value="mRNA"/>
</dbReference>
<dbReference type="EMBL" id="AY085301">
    <property type="protein sequence ID" value="AAM62532.1"/>
    <property type="molecule type" value="mRNA"/>
</dbReference>
<dbReference type="PIR" id="F86299">
    <property type="entry name" value="F86299"/>
</dbReference>
<dbReference type="RefSeq" id="NP_563997.1">
    <property type="nucleotide sequence ID" value="NM_101509.4"/>
</dbReference>
<dbReference type="SMR" id="Q9SA42"/>
<dbReference type="BioGRID" id="23453">
    <property type="interactions" value="1"/>
</dbReference>
<dbReference type="FunCoup" id="Q9SA42">
    <property type="interactions" value="2925"/>
</dbReference>
<dbReference type="IntAct" id="Q9SA42">
    <property type="interactions" value="2"/>
</dbReference>
<dbReference type="STRING" id="3702.Q9SA42"/>
<dbReference type="GlyGen" id="Q9SA42">
    <property type="glycosylation" value="1 site"/>
</dbReference>
<dbReference type="PaxDb" id="3702-AT1G16430.1"/>
<dbReference type="ProteomicsDB" id="250830"/>
<dbReference type="EnsemblPlants" id="AT1G16430.1">
    <property type="protein sequence ID" value="AT1G16430.1"/>
    <property type="gene ID" value="AT1G16430"/>
</dbReference>
<dbReference type="GeneID" id="838213"/>
<dbReference type="Gramene" id="AT1G16430.1">
    <property type="protein sequence ID" value="AT1G16430.1"/>
    <property type="gene ID" value="AT1G16430"/>
</dbReference>
<dbReference type="KEGG" id="ath:AT1G16430"/>
<dbReference type="Araport" id="AT1G16430"/>
<dbReference type="TAIR" id="AT1G16430"/>
<dbReference type="eggNOG" id="KOG3304">
    <property type="taxonomic scope" value="Eukaryota"/>
</dbReference>
<dbReference type="HOGENOM" id="CLU_117242_1_0_1"/>
<dbReference type="InParanoid" id="Q9SA42"/>
<dbReference type="OMA" id="KQAECDQ"/>
<dbReference type="PhylomeDB" id="Q9SA42"/>
<dbReference type="PRO" id="PR:Q9SA42"/>
<dbReference type="Proteomes" id="UP000006548">
    <property type="component" value="Chromosome 1"/>
</dbReference>
<dbReference type="ExpressionAtlas" id="Q9SA42">
    <property type="expression patterns" value="baseline and differential"/>
</dbReference>
<dbReference type="GO" id="GO:0016592">
    <property type="term" value="C:mediator complex"/>
    <property type="evidence" value="ECO:0000314"/>
    <property type="project" value="UniProtKB"/>
</dbReference>
<dbReference type="GO" id="GO:0003712">
    <property type="term" value="F:transcription coregulator activity"/>
    <property type="evidence" value="ECO:0007669"/>
    <property type="project" value="InterPro"/>
</dbReference>
<dbReference type="GO" id="GO:0006357">
    <property type="term" value="P:regulation of transcription by RNA polymerase II"/>
    <property type="evidence" value="ECO:0007669"/>
    <property type="project" value="InterPro"/>
</dbReference>
<dbReference type="InterPro" id="IPR009332">
    <property type="entry name" value="Med22"/>
</dbReference>
<dbReference type="PANTHER" id="PTHR12434">
    <property type="entry name" value="MEDIATOR OF RNA POLYMERASE II TRANSCRIPTION SUBUNIT 22"/>
    <property type="match status" value="1"/>
</dbReference>
<dbReference type="PANTHER" id="PTHR12434:SF6">
    <property type="entry name" value="MEDIATOR OF RNA POLYMERASE II TRANSCRIPTION SUBUNIT 22"/>
    <property type="match status" value="1"/>
</dbReference>
<dbReference type="Pfam" id="PF06179">
    <property type="entry name" value="Med22"/>
    <property type="match status" value="1"/>
</dbReference>
<gene>
    <name type="primary">MED22A</name>
    <name type="synonym">MED22_2</name>
    <name type="ordered locus">At1g16430</name>
    <name type="ORF">F3O9.23</name>
</gene>
<organism>
    <name type="scientific">Arabidopsis thaliana</name>
    <name type="common">Mouse-ear cress</name>
    <dbReference type="NCBI Taxonomy" id="3702"/>
    <lineage>
        <taxon>Eukaryota</taxon>
        <taxon>Viridiplantae</taxon>
        <taxon>Streptophyta</taxon>
        <taxon>Embryophyta</taxon>
        <taxon>Tracheophyta</taxon>
        <taxon>Spermatophyta</taxon>
        <taxon>Magnoliopsida</taxon>
        <taxon>eudicotyledons</taxon>
        <taxon>Gunneridae</taxon>
        <taxon>Pentapetalae</taxon>
        <taxon>rosids</taxon>
        <taxon>malvids</taxon>
        <taxon>Brassicales</taxon>
        <taxon>Brassicaceae</taxon>
        <taxon>Camelineae</taxon>
        <taxon>Arabidopsis</taxon>
    </lineage>
</organism>
<evidence type="ECO:0000255" key="1"/>
<evidence type="ECO:0000269" key="2">
    <source>
    </source>
</evidence>
<evidence type="ECO:0000305" key="3"/>
<sequence>MMNKGGGSGGGSGPTAAAAAAALQKQKALLQRVDTDITSVVDNFNQIVNVARVSDPPMKNSQEAYMMEMRASRLVQAADSLLKLVSELKQTAIFSGFASLNDHVEQRIAEFDQEAEKTNRLLARIADDASASLKELESHYYSSAQRSTLD</sequence>
<protein>
    <recommendedName>
        <fullName>Mediator of RNA polymerase II transcription subunit 22a</fullName>
    </recommendedName>
</protein>
<proteinExistence type="evidence at protein level"/>
<reference key="1">
    <citation type="journal article" date="2000" name="Nature">
        <title>Sequence and analysis of chromosome 1 of the plant Arabidopsis thaliana.</title>
        <authorList>
            <person name="Theologis A."/>
            <person name="Ecker J.R."/>
            <person name="Palm C.J."/>
            <person name="Federspiel N.A."/>
            <person name="Kaul S."/>
            <person name="White O."/>
            <person name="Alonso J."/>
            <person name="Altafi H."/>
            <person name="Araujo R."/>
            <person name="Bowman C.L."/>
            <person name="Brooks S.Y."/>
            <person name="Buehler E."/>
            <person name="Chan A."/>
            <person name="Chao Q."/>
            <person name="Chen H."/>
            <person name="Cheuk R.F."/>
            <person name="Chin C.W."/>
            <person name="Chung M.K."/>
            <person name="Conn L."/>
            <person name="Conway A.B."/>
            <person name="Conway A.R."/>
            <person name="Creasy T.H."/>
            <person name="Dewar K."/>
            <person name="Dunn P."/>
            <person name="Etgu P."/>
            <person name="Feldblyum T.V."/>
            <person name="Feng J.-D."/>
            <person name="Fong B."/>
            <person name="Fujii C.Y."/>
            <person name="Gill J.E."/>
            <person name="Goldsmith A.D."/>
            <person name="Haas B."/>
            <person name="Hansen N.F."/>
            <person name="Hughes B."/>
            <person name="Huizar L."/>
            <person name="Hunter J.L."/>
            <person name="Jenkins J."/>
            <person name="Johnson-Hopson C."/>
            <person name="Khan S."/>
            <person name="Khaykin E."/>
            <person name="Kim C.J."/>
            <person name="Koo H.L."/>
            <person name="Kremenetskaia I."/>
            <person name="Kurtz D.B."/>
            <person name="Kwan A."/>
            <person name="Lam B."/>
            <person name="Langin-Hooper S."/>
            <person name="Lee A."/>
            <person name="Lee J.M."/>
            <person name="Lenz C.A."/>
            <person name="Li J.H."/>
            <person name="Li Y.-P."/>
            <person name="Lin X."/>
            <person name="Liu S.X."/>
            <person name="Liu Z.A."/>
            <person name="Luros J.S."/>
            <person name="Maiti R."/>
            <person name="Marziali A."/>
            <person name="Militscher J."/>
            <person name="Miranda M."/>
            <person name="Nguyen M."/>
            <person name="Nierman W.C."/>
            <person name="Osborne B.I."/>
            <person name="Pai G."/>
            <person name="Peterson J."/>
            <person name="Pham P.K."/>
            <person name="Rizzo M."/>
            <person name="Rooney T."/>
            <person name="Rowley D."/>
            <person name="Sakano H."/>
            <person name="Salzberg S.L."/>
            <person name="Schwartz J.R."/>
            <person name="Shinn P."/>
            <person name="Southwick A.M."/>
            <person name="Sun H."/>
            <person name="Tallon L.J."/>
            <person name="Tambunga G."/>
            <person name="Toriumi M.J."/>
            <person name="Town C.D."/>
            <person name="Utterback T."/>
            <person name="Van Aken S."/>
            <person name="Vaysberg M."/>
            <person name="Vysotskaia V.S."/>
            <person name="Walker M."/>
            <person name="Wu D."/>
            <person name="Yu G."/>
            <person name="Fraser C.M."/>
            <person name="Venter J.C."/>
            <person name="Davis R.W."/>
        </authorList>
    </citation>
    <scope>NUCLEOTIDE SEQUENCE [LARGE SCALE GENOMIC DNA]</scope>
    <source>
        <strain>cv. Columbia</strain>
    </source>
</reference>
<reference key="2">
    <citation type="journal article" date="2017" name="Plant J.">
        <title>Araport11: a complete reannotation of the Arabidopsis thaliana reference genome.</title>
        <authorList>
            <person name="Cheng C.Y."/>
            <person name="Krishnakumar V."/>
            <person name="Chan A.P."/>
            <person name="Thibaud-Nissen F."/>
            <person name="Schobel S."/>
            <person name="Town C.D."/>
        </authorList>
    </citation>
    <scope>GENOME REANNOTATION</scope>
    <source>
        <strain>cv. Columbia</strain>
    </source>
</reference>
<reference key="3">
    <citation type="journal article" date="2002" name="Science">
        <title>Functional annotation of a full-length Arabidopsis cDNA collection.</title>
        <authorList>
            <person name="Seki M."/>
            <person name="Narusaka M."/>
            <person name="Kamiya A."/>
            <person name="Ishida J."/>
            <person name="Satou M."/>
            <person name="Sakurai T."/>
            <person name="Nakajima M."/>
            <person name="Enju A."/>
            <person name="Akiyama K."/>
            <person name="Oono Y."/>
            <person name="Muramatsu M."/>
            <person name="Hayashizaki Y."/>
            <person name="Kawai J."/>
            <person name="Carninci P."/>
            <person name="Itoh M."/>
            <person name="Ishii Y."/>
            <person name="Arakawa T."/>
            <person name="Shibata K."/>
            <person name="Shinagawa A."/>
            <person name="Shinozaki K."/>
        </authorList>
    </citation>
    <scope>NUCLEOTIDE SEQUENCE [LARGE SCALE MRNA]</scope>
    <source>
        <strain>cv. Columbia</strain>
    </source>
</reference>
<reference key="4">
    <citation type="journal article" date="2003" name="Science">
        <title>Empirical analysis of transcriptional activity in the Arabidopsis genome.</title>
        <authorList>
            <person name="Yamada K."/>
            <person name="Lim J."/>
            <person name="Dale J.M."/>
            <person name="Chen H."/>
            <person name="Shinn P."/>
            <person name="Palm C.J."/>
            <person name="Southwick A.M."/>
            <person name="Wu H.C."/>
            <person name="Kim C.J."/>
            <person name="Nguyen M."/>
            <person name="Pham P.K."/>
            <person name="Cheuk R.F."/>
            <person name="Karlin-Newmann G."/>
            <person name="Liu S.X."/>
            <person name="Lam B."/>
            <person name="Sakano H."/>
            <person name="Wu T."/>
            <person name="Yu G."/>
            <person name="Miranda M."/>
            <person name="Quach H.L."/>
            <person name="Tripp M."/>
            <person name="Chang C.H."/>
            <person name="Lee J.M."/>
            <person name="Toriumi M.J."/>
            <person name="Chan M.M."/>
            <person name="Tang C.C."/>
            <person name="Onodera C.S."/>
            <person name="Deng J.M."/>
            <person name="Akiyama K."/>
            <person name="Ansari Y."/>
            <person name="Arakawa T."/>
            <person name="Banh J."/>
            <person name="Banno F."/>
            <person name="Bowser L."/>
            <person name="Brooks S.Y."/>
            <person name="Carninci P."/>
            <person name="Chao Q."/>
            <person name="Choy N."/>
            <person name="Enju A."/>
            <person name="Goldsmith A.D."/>
            <person name="Gurjal M."/>
            <person name="Hansen N.F."/>
            <person name="Hayashizaki Y."/>
            <person name="Johnson-Hopson C."/>
            <person name="Hsuan V.W."/>
            <person name="Iida K."/>
            <person name="Karnes M."/>
            <person name="Khan S."/>
            <person name="Koesema E."/>
            <person name="Ishida J."/>
            <person name="Jiang P.X."/>
            <person name="Jones T."/>
            <person name="Kawai J."/>
            <person name="Kamiya A."/>
            <person name="Meyers C."/>
            <person name="Nakajima M."/>
            <person name="Narusaka M."/>
            <person name="Seki M."/>
            <person name="Sakurai T."/>
            <person name="Satou M."/>
            <person name="Tamse R."/>
            <person name="Vaysberg M."/>
            <person name="Wallender E.K."/>
            <person name="Wong C."/>
            <person name="Yamamura Y."/>
            <person name="Yuan S."/>
            <person name="Shinozaki K."/>
            <person name="Davis R.W."/>
            <person name="Theologis A."/>
            <person name="Ecker J.R."/>
        </authorList>
    </citation>
    <scope>NUCLEOTIDE SEQUENCE [LARGE SCALE MRNA]</scope>
    <source>
        <strain>cv. Columbia</strain>
    </source>
</reference>
<reference key="5">
    <citation type="submission" date="2002-03" db="EMBL/GenBank/DDBJ databases">
        <title>Full-length cDNA from Arabidopsis thaliana.</title>
        <authorList>
            <person name="Brover V.V."/>
            <person name="Troukhan M.E."/>
            <person name="Alexandrov N.A."/>
            <person name="Lu Y.-P."/>
            <person name="Flavell R.B."/>
            <person name="Feldmann K.A."/>
        </authorList>
    </citation>
    <scope>NUCLEOTIDE SEQUENCE [LARGE SCALE MRNA]</scope>
</reference>
<reference key="6">
    <citation type="journal article" date="2007" name="Mol. Cell">
        <title>Purification of a plant mediator from Arabidopsis thaliana identifies PFT1 as the Med25 subunit.</title>
        <authorList>
            <person name="Baeckstroem S."/>
            <person name="Elfving N."/>
            <person name="Nilsson R."/>
            <person name="Wingsle G."/>
            <person name="Bjoerklund S."/>
        </authorList>
    </citation>
    <scope>IDENTIFICATION BY MASS SPECTROMETRY</scope>
    <scope>SUBUNIT</scope>
    <scope>NOMENCLATURE</scope>
</reference>
<reference key="7">
    <citation type="journal article" date="2011" name="Plant Physiol.">
        <title>The Mediator complex in plants: structure, phylogeny, and expression profiling of representative genes in a dicot (Arabidopsis) and a monocot (rice) during reproduction and abiotic stress.</title>
        <authorList>
            <person name="Mathur S."/>
            <person name="Vyas S."/>
            <person name="Kapoor S."/>
            <person name="Tyagi A.K."/>
        </authorList>
    </citation>
    <scope>IDENTIFICATION</scope>
    <scope>NOMENCLATURE</scope>
</reference>
<feature type="chain" id="PRO_0000418121" description="Mediator of RNA polymerase II transcription subunit 22a">
    <location>
        <begin position="1"/>
        <end position="150"/>
    </location>
</feature>
<feature type="coiled-coil region" evidence="1">
    <location>
        <begin position="99"/>
        <end position="127"/>
    </location>
</feature>
<feature type="sequence conflict" description="In Ref. 5; AAM62532." evidence="3" ref="5">
    <original>S</original>
    <variation>P</variation>
    <location>
        <position position="8"/>
    </location>
</feature>
<feature type="sequence conflict" description="In Ref. 5; AAM62532." evidence="3" ref="5">
    <location>
        <position position="29"/>
    </location>
</feature>
<feature type="sequence conflict" description="In Ref. 5; AAM62532." evidence="3" ref="5">
    <original>N</original>
    <variation>T</variation>
    <location>
        <position position="45"/>
    </location>
</feature>